<name>DTD_YERPB</name>
<keyword id="KW-0963">Cytoplasm</keyword>
<keyword id="KW-0378">Hydrolase</keyword>
<keyword id="KW-0694">RNA-binding</keyword>
<keyword id="KW-0820">tRNA-binding</keyword>
<gene>
    <name evidence="1" type="primary">dtd</name>
    <name type="ordered locus">YPTS_0029</name>
</gene>
<dbReference type="EC" id="3.1.1.96" evidence="1"/>
<dbReference type="EMBL" id="CP001048">
    <property type="protein sequence ID" value="ACC87028.1"/>
    <property type="molecule type" value="Genomic_DNA"/>
</dbReference>
<dbReference type="RefSeq" id="WP_002209009.1">
    <property type="nucleotide sequence ID" value="NZ_CP009780.1"/>
</dbReference>
<dbReference type="SMR" id="B2JYL4"/>
<dbReference type="GeneID" id="57974561"/>
<dbReference type="KEGG" id="ypb:YPTS_0029"/>
<dbReference type="PATRIC" id="fig|502801.10.peg.3706"/>
<dbReference type="GO" id="GO:0005737">
    <property type="term" value="C:cytoplasm"/>
    <property type="evidence" value="ECO:0007669"/>
    <property type="project" value="UniProtKB-SubCell"/>
</dbReference>
<dbReference type="GO" id="GO:0051500">
    <property type="term" value="F:D-tyrosyl-tRNA(Tyr) deacylase activity"/>
    <property type="evidence" value="ECO:0007669"/>
    <property type="project" value="TreeGrafter"/>
</dbReference>
<dbReference type="GO" id="GO:0106026">
    <property type="term" value="F:Gly-tRNA(Ala) deacylase activity"/>
    <property type="evidence" value="ECO:0007669"/>
    <property type="project" value="UniProtKB-UniRule"/>
</dbReference>
<dbReference type="GO" id="GO:0043908">
    <property type="term" value="F:Ser(Gly)-tRNA(Ala) hydrolase activity"/>
    <property type="evidence" value="ECO:0007669"/>
    <property type="project" value="UniProtKB-UniRule"/>
</dbReference>
<dbReference type="GO" id="GO:0000049">
    <property type="term" value="F:tRNA binding"/>
    <property type="evidence" value="ECO:0007669"/>
    <property type="project" value="UniProtKB-UniRule"/>
</dbReference>
<dbReference type="GO" id="GO:0019478">
    <property type="term" value="P:D-amino acid catabolic process"/>
    <property type="evidence" value="ECO:0007669"/>
    <property type="project" value="UniProtKB-UniRule"/>
</dbReference>
<dbReference type="CDD" id="cd00563">
    <property type="entry name" value="Dtyr_deacylase"/>
    <property type="match status" value="1"/>
</dbReference>
<dbReference type="FunFam" id="3.50.80.10:FF:000001">
    <property type="entry name" value="D-aminoacyl-tRNA deacylase"/>
    <property type="match status" value="1"/>
</dbReference>
<dbReference type="Gene3D" id="3.50.80.10">
    <property type="entry name" value="D-tyrosyl-tRNA(Tyr) deacylase"/>
    <property type="match status" value="1"/>
</dbReference>
<dbReference type="HAMAP" id="MF_00518">
    <property type="entry name" value="Deacylase_Dtd"/>
    <property type="match status" value="1"/>
</dbReference>
<dbReference type="InterPro" id="IPR003732">
    <property type="entry name" value="Daa-tRNA_deacyls_DTD"/>
</dbReference>
<dbReference type="InterPro" id="IPR023509">
    <property type="entry name" value="DTD-like_sf"/>
</dbReference>
<dbReference type="NCBIfam" id="TIGR00256">
    <property type="entry name" value="D-aminoacyl-tRNA deacylase"/>
    <property type="match status" value="1"/>
</dbReference>
<dbReference type="PANTHER" id="PTHR10472:SF5">
    <property type="entry name" value="D-AMINOACYL-TRNA DEACYLASE 1"/>
    <property type="match status" value="1"/>
</dbReference>
<dbReference type="PANTHER" id="PTHR10472">
    <property type="entry name" value="D-TYROSYL-TRNA TYR DEACYLASE"/>
    <property type="match status" value="1"/>
</dbReference>
<dbReference type="Pfam" id="PF02580">
    <property type="entry name" value="Tyr_Deacylase"/>
    <property type="match status" value="1"/>
</dbReference>
<dbReference type="SUPFAM" id="SSF69500">
    <property type="entry name" value="DTD-like"/>
    <property type="match status" value="1"/>
</dbReference>
<protein>
    <recommendedName>
        <fullName evidence="1">D-aminoacyl-tRNA deacylase</fullName>
        <shortName evidence="1">DTD</shortName>
        <ecNumber evidence="1">3.1.1.96</ecNumber>
    </recommendedName>
    <alternativeName>
        <fullName evidence="1">Gly-tRNA(Ala) deacylase</fullName>
    </alternativeName>
</protein>
<feature type="chain" id="PRO_1000127593" description="D-aminoacyl-tRNA deacylase">
    <location>
        <begin position="1"/>
        <end position="145"/>
    </location>
</feature>
<feature type="short sequence motif" description="Gly-cisPro motif, important for rejection of L-amino acids" evidence="1">
    <location>
        <begin position="137"/>
        <end position="138"/>
    </location>
</feature>
<evidence type="ECO:0000255" key="1">
    <source>
        <dbReference type="HAMAP-Rule" id="MF_00518"/>
    </source>
</evidence>
<proteinExistence type="inferred from homology"/>
<accession>B2JYL4</accession>
<sequence length="145" mass="15863">MIALIQRALSASVVVEGNIVGEIGPGLLVLLGVEQGDTEQKAQRLCERVLGYRIFSDENDKMNLNVQQAGGSVLVVSQFTLVADTQKGMRPSFSRGAIPQEADRLYQYFVAQCRERGVKTETGLFAADMKVSLVNDGPVTFWLQV</sequence>
<organism>
    <name type="scientific">Yersinia pseudotuberculosis serotype IB (strain PB1/+)</name>
    <dbReference type="NCBI Taxonomy" id="502801"/>
    <lineage>
        <taxon>Bacteria</taxon>
        <taxon>Pseudomonadati</taxon>
        <taxon>Pseudomonadota</taxon>
        <taxon>Gammaproteobacteria</taxon>
        <taxon>Enterobacterales</taxon>
        <taxon>Yersiniaceae</taxon>
        <taxon>Yersinia</taxon>
    </lineage>
</organism>
<comment type="function">
    <text evidence="1">An aminoacyl-tRNA editing enzyme that deacylates mischarged D-aminoacyl-tRNAs. Also deacylates mischarged glycyl-tRNA(Ala), protecting cells against glycine mischarging by AlaRS. Acts via tRNA-based rather than protein-based catalysis; rejects L-amino acids rather than detecting D-amino acids in the active site. By recycling D-aminoacyl-tRNA to D-amino acids and free tRNA molecules, this enzyme counteracts the toxicity associated with the formation of D-aminoacyl-tRNA entities in vivo and helps enforce protein L-homochirality.</text>
</comment>
<comment type="catalytic activity">
    <reaction evidence="1">
        <text>glycyl-tRNA(Ala) + H2O = tRNA(Ala) + glycine + H(+)</text>
        <dbReference type="Rhea" id="RHEA:53744"/>
        <dbReference type="Rhea" id="RHEA-COMP:9657"/>
        <dbReference type="Rhea" id="RHEA-COMP:13640"/>
        <dbReference type="ChEBI" id="CHEBI:15377"/>
        <dbReference type="ChEBI" id="CHEBI:15378"/>
        <dbReference type="ChEBI" id="CHEBI:57305"/>
        <dbReference type="ChEBI" id="CHEBI:78442"/>
        <dbReference type="ChEBI" id="CHEBI:78522"/>
        <dbReference type="EC" id="3.1.1.96"/>
    </reaction>
</comment>
<comment type="catalytic activity">
    <reaction evidence="1">
        <text>a D-aminoacyl-tRNA + H2O = a tRNA + a D-alpha-amino acid + H(+)</text>
        <dbReference type="Rhea" id="RHEA:13953"/>
        <dbReference type="Rhea" id="RHEA-COMP:10123"/>
        <dbReference type="Rhea" id="RHEA-COMP:10124"/>
        <dbReference type="ChEBI" id="CHEBI:15377"/>
        <dbReference type="ChEBI" id="CHEBI:15378"/>
        <dbReference type="ChEBI" id="CHEBI:59871"/>
        <dbReference type="ChEBI" id="CHEBI:78442"/>
        <dbReference type="ChEBI" id="CHEBI:79333"/>
        <dbReference type="EC" id="3.1.1.96"/>
    </reaction>
</comment>
<comment type="subunit">
    <text evidence="1">Homodimer.</text>
</comment>
<comment type="subcellular location">
    <subcellularLocation>
        <location evidence="1">Cytoplasm</location>
    </subcellularLocation>
</comment>
<comment type="domain">
    <text evidence="1">A Gly-cisPro motif from one monomer fits into the active site of the other monomer to allow specific chiral rejection of L-amino acids.</text>
</comment>
<comment type="similarity">
    <text evidence="1">Belongs to the DTD family.</text>
</comment>
<reference key="1">
    <citation type="submission" date="2008-04" db="EMBL/GenBank/DDBJ databases">
        <title>Complete sequence of Yersinia pseudotuberculosis PB1/+.</title>
        <authorList>
            <person name="Copeland A."/>
            <person name="Lucas S."/>
            <person name="Lapidus A."/>
            <person name="Glavina del Rio T."/>
            <person name="Dalin E."/>
            <person name="Tice H."/>
            <person name="Bruce D."/>
            <person name="Goodwin L."/>
            <person name="Pitluck S."/>
            <person name="Munk A.C."/>
            <person name="Brettin T."/>
            <person name="Detter J.C."/>
            <person name="Han C."/>
            <person name="Tapia R."/>
            <person name="Schmutz J."/>
            <person name="Larimer F."/>
            <person name="Land M."/>
            <person name="Hauser L."/>
            <person name="Challacombe J.F."/>
            <person name="Green L."/>
            <person name="Lindler L.E."/>
            <person name="Nikolich M.P."/>
            <person name="Richardson P."/>
        </authorList>
    </citation>
    <scope>NUCLEOTIDE SEQUENCE [LARGE SCALE GENOMIC DNA]</scope>
    <source>
        <strain>PB1/+</strain>
    </source>
</reference>